<dbReference type="EMBL" id="AAHF01000008">
    <property type="protein sequence ID" value="EAL87467.1"/>
    <property type="molecule type" value="Genomic_DNA"/>
</dbReference>
<dbReference type="RefSeq" id="XP_749505.1">
    <property type="nucleotide sequence ID" value="XM_744412.1"/>
</dbReference>
<dbReference type="SMR" id="Q4WHY8"/>
<dbReference type="FunCoup" id="Q4WHY8">
    <property type="interactions" value="30"/>
</dbReference>
<dbReference type="STRING" id="330879.Q4WHY8"/>
<dbReference type="TCDB" id="1.A.56.1.16">
    <property type="family name" value="the copper transporter (ctr) family"/>
</dbReference>
<dbReference type="EnsemblFungi" id="EAL87467">
    <property type="protein sequence ID" value="EAL87467"/>
    <property type="gene ID" value="AFUA_2G03730"/>
</dbReference>
<dbReference type="GeneID" id="3506782"/>
<dbReference type="KEGG" id="afm:AFUA_2G03730"/>
<dbReference type="VEuPathDB" id="FungiDB:Afu2g03730"/>
<dbReference type="eggNOG" id="KOG3386">
    <property type="taxonomic scope" value="Eukaryota"/>
</dbReference>
<dbReference type="HOGENOM" id="CLU_079690_0_1_1"/>
<dbReference type="InParanoid" id="Q4WHY8"/>
<dbReference type="OMA" id="ENATVCC"/>
<dbReference type="OrthoDB" id="161814at2759"/>
<dbReference type="Proteomes" id="UP000002530">
    <property type="component" value="Chromosome 2"/>
</dbReference>
<dbReference type="GO" id="GO:0005886">
    <property type="term" value="C:plasma membrane"/>
    <property type="evidence" value="ECO:0007669"/>
    <property type="project" value="UniProtKB-SubCell"/>
</dbReference>
<dbReference type="GO" id="GO:0005375">
    <property type="term" value="F:copper ion transmembrane transporter activity"/>
    <property type="evidence" value="ECO:0007669"/>
    <property type="project" value="InterPro"/>
</dbReference>
<dbReference type="InterPro" id="IPR007274">
    <property type="entry name" value="Cop_transporter"/>
</dbReference>
<dbReference type="PANTHER" id="PTHR12483:SF73">
    <property type="entry name" value="COPPER TRANSPORT PROTEIN CTR3"/>
    <property type="match status" value="1"/>
</dbReference>
<dbReference type="PANTHER" id="PTHR12483">
    <property type="entry name" value="SOLUTE CARRIER FAMILY 31 COPPER TRANSPORTERS"/>
    <property type="match status" value="1"/>
</dbReference>
<dbReference type="Pfam" id="PF04145">
    <property type="entry name" value="Ctr"/>
    <property type="match status" value="1"/>
</dbReference>
<evidence type="ECO:0000255" key="1"/>
<evidence type="ECO:0000269" key="2">
    <source>
    </source>
</evidence>
<evidence type="ECO:0000303" key="3">
    <source>
    </source>
</evidence>
<evidence type="ECO:0000305" key="4"/>
<evidence type="ECO:0000305" key="5">
    <source>
    </source>
</evidence>
<keyword id="KW-1003">Cell membrane</keyword>
<keyword id="KW-0186">Copper</keyword>
<keyword id="KW-0187">Copper transport</keyword>
<keyword id="KW-0406">Ion transport</keyword>
<keyword id="KW-0472">Membrane</keyword>
<keyword id="KW-1185">Reference proteome</keyword>
<keyword id="KW-0812">Transmembrane</keyword>
<keyword id="KW-1133">Transmembrane helix</keyword>
<keyword id="KW-0813">Transport</keyword>
<sequence>MDHMSHNMDSMASMTSTMTMAMSASSTASAPMSTGSAHSMGGMDMGGKDSMHSCKISMLWNWYTIDSCFLSSQWHNTSRGMFAGSCIGVICLVICLEFLRRVGREYDAFIVRRARLRNQYLSTTASSQGLTRATDADASAEDSPNSTRGVVRAASKGAGRTLCSAFEDKTPVRPTLIEQLVRALLHMLQFAVAYFVMLLAMYFNGYIIICIFIGAFLGSFIFSWEPLNLQKEYVIPLPLPYLPQMICKELGLTCVLV</sequence>
<protein>
    <recommendedName>
        <fullName evidence="3">High-affinity copper transporter ctrC</fullName>
    </recommendedName>
    <alternativeName>
        <fullName evidence="3">Copper transport protein C</fullName>
    </alternativeName>
</protein>
<organism>
    <name type="scientific">Aspergillus fumigatus (strain ATCC MYA-4609 / CBS 101355 / FGSC A1100 / Af293)</name>
    <name type="common">Neosartorya fumigata</name>
    <dbReference type="NCBI Taxonomy" id="330879"/>
    <lineage>
        <taxon>Eukaryota</taxon>
        <taxon>Fungi</taxon>
        <taxon>Dikarya</taxon>
        <taxon>Ascomycota</taxon>
        <taxon>Pezizomycotina</taxon>
        <taxon>Eurotiomycetes</taxon>
        <taxon>Eurotiomycetidae</taxon>
        <taxon>Eurotiales</taxon>
        <taxon>Aspergillaceae</taxon>
        <taxon>Aspergillus</taxon>
        <taxon>Aspergillus subgen. Fumigati</taxon>
    </lineage>
</organism>
<proteinExistence type="evidence at transcript level"/>
<name>CTRC_ASPFU</name>
<accession>Q4WHY8</accession>
<feature type="chain" id="PRO_0000457375" description="High-affinity copper transporter ctrC">
    <location>
        <begin position="1"/>
        <end position="257"/>
    </location>
</feature>
<feature type="transmembrane region" description="Helical" evidence="1">
    <location>
        <begin position="79"/>
        <end position="99"/>
    </location>
</feature>
<feature type="transmembrane region" description="Helical" evidence="1">
    <location>
        <begin position="202"/>
        <end position="222"/>
    </location>
</feature>
<reference key="1">
    <citation type="journal article" date="2005" name="Nature">
        <title>Genomic sequence of the pathogenic and allergenic filamentous fungus Aspergillus fumigatus.</title>
        <authorList>
            <person name="Nierman W.C."/>
            <person name="Pain A."/>
            <person name="Anderson M.J."/>
            <person name="Wortman J.R."/>
            <person name="Kim H.S."/>
            <person name="Arroyo J."/>
            <person name="Berriman M."/>
            <person name="Abe K."/>
            <person name="Archer D.B."/>
            <person name="Bermejo C."/>
            <person name="Bennett J.W."/>
            <person name="Bowyer P."/>
            <person name="Chen D."/>
            <person name="Collins M."/>
            <person name="Coulsen R."/>
            <person name="Davies R."/>
            <person name="Dyer P.S."/>
            <person name="Farman M.L."/>
            <person name="Fedorova N."/>
            <person name="Fedorova N.D."/>
            <person name="Feldblyum T.V."/>
            <person name="Fischer R."/>
            <person name="Fosker N."/>
            <person name="Fraser A."/>
            <person name="Garcia J.L."/>
            <person name="Garcia M.J."/>
            <person name="Goble A."/>
            <person name="Goldman G.H."/>
            <person name="Gomi K."/>
            <person name="Griffith-Jones S."/>
            <person name="Gwilliam R."/>
            <person name="Haas B.J."/>
            <person name="Haas H."/>
            <person name="Harris D.E."/>
            <person name="Horiuchi H."/>
            <person name="Huang J."/>
            <person name="Humphray S."/>
            <person name="Jimenez J."/>
            <person name="Keller N."/>
            <person name="Khouri H."/>
            <person name="Kitamoto K."/>
            <person name="Kobayashi T."/>
            <person name="Konzack S."/>
            <person name="Kulkarni R."/>
            <person name="Kumagai T."/>
            <person name="Lafton A."/>
            <person name="Latge J.-P."/>
            <person name="Li W."/>
            <person name="Lord A."/>
            <person name="Lu C."/>
            <person name="Majoros W.H."/>
            <person name="May G.S."/>
            <person name="Miller B.L."/>
            <person name="Mohamoud Y."/>
            <person name="Molina M."/>
            <person name="Monod M."/>
            <person name="Mouyna I."/>
            <person name="Mulligan S."/>
            <person name="Murphy L.D."/>
            <person name="O'Neil S."/>
            <person name="Paulsen I."/>
            <person name="Penalva M.A."/>
            <person name="Pertea M."/>
            <person name="Price C."/>
            <person name="Pritchard B.L."/>
            <person name="Quail M.A."/>
            <person name="Rabbinowitsch E."/>
            <person name="Rawlins N."/>
            <person name="Rajandream M.A."/>
            <person name="Reichard U."/>
            <person name="Renauld H."/>
            <person name="Robson G.D."/>
            <person name="Rodriguez de Cordoba S."/>
            <person name="Rodriguez-Pena J.M."/>
            <person name="Ronning C.M."/>
            <person name="Rutter S."/>
            <person name="Salzberg S.L."/>
            <person name="Sanchez M."/>
            <person name="Sanchez-Ferrero J.C."/>
            <person name="Saunders D."/>
            <person name="Seeger K."/>
            <person name="Squares R."/>
            <person name="Squares S."/>
            <person name="Takeuchi M."/>
            <person name="Tekaia F."/>
            <person name="Turner G."/>
            <person name="Vazquez de Aldana C.R."/>
            <person name="Weidman J."/>
            <person name="White O."/>
            <person name="Woodward J.R."/>
            <person name="Yu J.-H."/>
            <person name="Fraser C.M."/>
            <person name="Galagan J.E."/>
            <person name="Asai K."/>
            <person name="Machida M."/>
            <person name="Hall N."/>
            <person name="Barrell B.G."/>
            <person name="Denning D.W."/>
        </authorList>
    </citation>
    <scope>NUCLEOTIDE SEQUENCE [LARGE SCALE GENOMIC DNA]</scope>
    <source>
        <strain>ATCC MYA-4609 / CBS 101355 / FGSC A1100 / Af293</strain>
    </source>
</reference>
<reference key="2">
    <citation type="journal article" date="2014" name="Fungal Genet. Biol.">
        <title>Identification of high-affinity copper transporters in Aspergillus fumigatus.</title>
        <authorList>
            <person name="Park Y.S."/>
            <person name="Lian H."/>
            <person name="Chang M."/>
            <person name="Kang C.M."/>
            <person name="Yun C.W."/>
        </authorList>
    </citation>
    <scope>FUNCTION</scope>
    <scope>TRANSPORT ACTIVITY</scope>
    <scope>SUBCELLULAR LOCATION</scope>
    <scope>DISRUPTION PHENOTYPE</scope>
    <scope>INDUCTION</scope>
</reference>
<comment type="function">
    <text evidence="2 5">High-affinity copper transporter of plasma membrane that mediates copper uptake under low copper conditions (PubMed:25281782). The mechanism driving the transmembrane transport of copper has still to be determined (Probable). Acts as a potential virulence factor (PubMed:25281782).</text>
</comment>
<comment type="catalytic activity">
    <reaction evidence="2">
        <text>Cu(2+)(in) = Cu(2+)(out)</text>
        <dbReference type="Rhea" id="RHEA:28703"/>
        <dbReference type="ChEBI" id="CHEBI:29036"/>
    </reaction>
    <physiologicalReaction direction="right-to-left" evidence="2">
        <dbReference type="Rhea" id="RHEA:28705"/>
    </physiologicalReaction>
</comment>
<comment type="subcellular location">
    <subcellularLocation>
        <location evidence="1">Cell membrane</location>
        <topology evidence="1">Multi-pass membrane protein</topology>
    </subcellularLocation>
</comment>
<comment type="induction">
    <text evidence="2">Expression is up-regulated by copper deficiency and decreased dramatically when the copper concentration increases (PubMed:25281782). Expression is up-regulated by the deletion of ctrA2 (PubMed:25281782).</text>
</comment>
<comment type="disruption phenotype">
    <text evidence="2">Exhibits a reduced copper content and leads to cell decolorization due to lower laccase activity, when ctrA2 is also deleted.</text>
</comment>
<comment type="similarity">
    <text evidence="4">Belongs to the copper transporter (Ctr) (TC 1.A.56) family. SLC31A subfamily.</text>
</comment>
<gene>
    <name evidence="3" type="primary">ctrC</name>
    <name type="ORF">AFUA_2G03730</name>
</gene>